<comment type="function">
    <text>General transcription factor that functions at the core of the DNA-binding multiprotein factor TFIID. Binding of TFIID to the TATA box is the initial transcriptional step of the pre-initiation complex (PIC), playing a role in the activation of eukaryotic genes transcribed by RNA polymerase II.</text>
</comment>
<comment type="subunit">
    <text>Belongs to the TFIID complex together with the TBP-associated factors (TAFs). Binds DNA as monomer.</text>
</comment>
<comment type="subcellular location">
    <subcellularLocation>
        <location>Nucleus</location>
    </subcellularLocation>
</comment>
<comment type="similarity">
    <text evidence="2">Belongs to the TBP family.</text>
</comment>
<feature type="chain" id="PRO_0000153974" description="TATA-box-binding protein">
    <location>
        <begin position="1"/>
        <end position="246"/>
    </location>
</feature>
<feature type="repeat" description="1">
    <location>
        <begin position="53"/>
        <end position="129"/>
    </location>
</feature>
<feature type="repeat" description="2">
    <location>
        <begin position="143"/>
        <end position="220"/>
    </location>
</feature>
<feature type="region of interest" description="Disordered" evidence="1">
    <location>
        <begin position="1"/>
        <end position="27"/>
    </location>
</feature>
<accession>Q27850</accession>
<proteinExistence type="inferred from homology"/>
<keyword id="KW-0238">DNA-binding</keyword>
<keyword id="KW-0539">Nucleus</keyword>
<keyword id="KW-0677">Repeat</keyword>
<keyword id="KW-0804">Transcription</keyword>
<reference key="1">
    <citation type="journal article" date="1994" name="Mol. Cell. Biol.">
        <title>TATA-binding protein and nuclear differentiation in Tetrahymena thermophila.</title>
        <authorList>
            <person name="Stargell L.A."/>
            <person name="Gorovsky M.A."/>
        </authorList>
    </citation>
    <scope>NUCLEOTIDE SEQUENCE</scope>
    <source>
        <strain>CU428</strain>
    </source>
</reference>
<evidence type="ECO:0000256" key="1">
    <source>
        <dbReference type="SAM" id="MobiDB-lite"/>
    </source>
</evidence>
<evidence type="ECO:0000305" key="2"/>
<sequence>MSSDKTSQQTFKLAPNNSVAQSNSIDQNKNKNNILSTIETMDKSISEDLYPKLQNIVSTVNLSTKLDLKQIALRARNAEYNPKRFAAVIMRLRDPKTTALIFASGKMVCTGAKTEEDSNRAARKYAKIIQKIGFPVQFKDFKIQNIVGSTDVKFPINLDHLEQDHKKFVQYEPEIFPGKIYREFNTKIVLLIFVSGKIVLTGAKTRENINKAFQKIYWVLYNYQKKDYRGANLHNQNLNIKPSIKN</sequence>
<dbReference type="EMBL" id="L16957">
    <property type="protein sequence ID" value="AAC14470.1"/>
    <property type="molecule type" value="Unassigned_DNA"/>
</dbReference>
<dbReference type="PIR" id="S41473">
    <property type="entry name" value="S41473"/>
</dbReference>
<dbReference type="SMR" id="Q27850"/>
<dbReference type="GO" id="GO:0005634">
    <property type="term" value="C:nucleus"/>
    <property type="evidence" value="ECO:0007669"/>
    <property type="project" value="UniProtKB-SubCell"/>
</dbReference>
<dbReference type="GO" id="GO:0003677">
    <property type="term" value="F:DNA binding"/>
    <property type="evidence" value="ECO:0007669"/>
    <property type="project" value="UniProtKB-KW"/>
</dbReference>
<dbReference type="GO" id="GO:0006352">
    <property type="term" value="P:DNA-templated transcription initiation"/>
    <property type="evidence" value="ECO:0007669"/>
    <property type="project" value="InterPro"/>
</dbReference>
<dbReference type="CDD" id="cd04516">
    <property type="entry name" value="TBP_eukaryotes"/>
    <property type="match status" value="1"/>
</dbReference>
<dbReference type="FunFam" id="3.30.310.10:FF:000001">
    <property type="entry name" value="TATA-box-binding protein 2"/>
    <property type="match status" value="1"/>
</dbReference>
<dbReference type="FunFam" id="3.30.310.10:FF:000002">
    <property type="entry name" value="TATA-box-binding protein 2"/>
    <property type="match status" value="1"/>
</dbReference>
<dbReference type="Gene3D" id="3.30.310.10">
    <property type="entry name" value="TATA-Binding Protein"/>
    <property type="match status" value="2"/>
</dbReference>
<dbReference type="HAMAP" id="MF_00408">
    <property type="entry name" value="TATA_bind_prot_arch"/>
    <property type="match status" value="1"/>
</dbReference>
<dbReference type="InterPro" id="IPR000814">
    <property type="entry name" value="TBP"/>
</dbReference>
<dbReference type="InterPro" id="IPR030491">
    <property type="entry name" value="TBP_CS"/>
</dbReference>
<dbReference type="InterPro" id="IPR012295">
    <property type="entry name" value="TBP_dom_sf"/>
</dbReference>
<dbReference type="InterPro" id="IPR033710">
    <property type="entry name" value="TBP_eukaryotic"/>
</dbReference>
<dbReference type="PANTHER" id="PTHR10126">
    <property type="entry name" value="TATA-BOX BINDING PROTEIN"/>
    <property type="match status" value="1"/>
</dbReference>
<dbReference type="Pfam" id="PF00352">
    <property type="entry name" value="TBP"/>
    <property type="match status" value="2"/>
</dbReference>
<dbReference type="PRINTS" id="PR00686">
    <property type="entry name" value="TIFACTORIID"/>
</dbReference>
<dbReference type="SUPFAM" id="SSF55945">
    <property type="entry name" value="TATA-box binding protein-like"/>
    <property type="match status" value="2"/>
</dbReference>
<dbReference type="PROSITE" id="PS00351">
    <property type="entry name" value="TFIID"/>
    <property type="match status" value="1"/>
</dbReference>
<name>TBP_TETTH</name>
<organism>
    <name type="scientific">Tetrahymena thermophila</name>
    <dbReference type="NCBI Taxonomy" id="5911"/>
    <lineage>
        <taxon>Eukaryota</taxon>
        <taxon>Sar</taxon>
        <taxon>Alveolata</taxon>
        <taxon>Ciliophora</taxon>
        <taxon>Intramacronucleata</taxon>
        <taxon>Oligohymenophorea</taxon>
        <taxon>Hymenostomatida</taxon>
        <taxon>Tetrahymenina</taxon>
        <taxon>Tetrahymenidae</taxon>
        <taxon>Tetrahymena</taxon>
    </lineage>
</organism>
<protein>
    <recommendedName>
        <fullName>TATA-box-binding protein</fullName>
    </recommendedName>
    <alternativeName>
        <fullName>TATA sequence-binding protein</fullName>
        <shortName>TBP</shortName>
    </alternativeName>
    <alternativeName>
        <fullName>TATA-binding factor</fullName>
    </alternativeName>
    <alternativeName>
        <fullName>TATA-box factor</fullName>
    </alternativeName>
    <alternativeName>
        <fullName>Transcription initiation factor TFIID TBP subunit</fullName>
    </alternativeName>
</protein>